<gene>
    <name evidence="1" type="primary">ureA</name>
    <name type="ordered locus">Bcen2424_0902</name>
</gene>
<keyword id="KW-0963">Cytoplasm</keyword>
<keyword id="KW-0378">Hydrolase</keyword>
<name>URE3_BURCH</name>
<comment type="catalytic activity">
    <reaction evidence="1">
        <text>urea + 2 H2O + H(+) = hydrogencarbonate + 2 NH4(+)</text>
        <dbReference type="Rhea" id="RHEA:20557"/>
        <dbReference type="ChEBI" id="CHEBI:15377"/>
        <dbReference type="ChEBI" id="CHEBI:15378"/>
        <dbReference type="ChEBI" id="CHEBI:16199"/>
        <dbReference type="ChEBI" id="CHEBI:17544"/>
        <dbReference type="ChEBI" id="CHEBI:28938"/>
        <dbReference type="EC" id="3.5.1.5"/>
    </reaction>
</comment>
<comment type="pathway">
    <text evidence="1">Nitrogen metabolism; urea degradation; CO(2) and NH(3) from urea (urease route): step 1/1.</text>
</comment>
<comment type="subunit">
    <text evidence="1">Heterotrimer of UreA (gamma), UreB (beta) and UreC (alpha) subunits. Three heterotrimers associate to form the active enzyme.</text>
</comment>
<comment type="subcellular location">
    <subcellularLocation>
        <location evidence="1">Cytoplasm</location>
    </subcellularLocation>
</comment>
<comment type="similarity">
    <text evidence="1">Belongs to the urease gamma subunit family.</text>
</comment>
<feature type="chain" id="PRO_1000046313" description="Urease subunit gamma">
    <location>
        <begin position="1"/>
        <end position="100"/>
    </location>
</feature>
<reference key="1">
    <citation type="submission" date="2006-08" db="EMBL/GenBank/DDBJ databases">
        <title>Complete sequence of chromosome 1 of Burkholderia cenocepacia HI2424.</title>
        <authorList>
            <person name="Copeland A."/>
            <person name="Lucas S."/>
            <person name="Lapidus A."/>
            <person name="Barry K."/>
            <person name="Detter J.C."/>
            <person name="Glavina del Rio T."/>
            <person name="Hammon N."/>
            <person name="Israni S."/>
            <person name="Pitluck S."/>
            <person name="Chain P."/>
            <person name="Malfatti S."/>
            <person name="Shin M."/>
            <person name="Vergez L."/>
            <person name="Schmutz J."/>
            <person name="Larimer F."/>
            <person name="Land M."/>
            <person name="Hauser L."/>
            <person name="Kyrpides N."/>
            <person name="Kim E."/>
            <person name="LiPuma J.J."/>
            <person name="Gonzalez C.F."/>
            <person name="Konstantinidis K."/>
            <person name="Tiedje J.M."/>
            <person name="Richardson P."/>
        </authorList>
    </citation>
    <scope>NUCLEOTIDE SEQUENCE [LARGE SCALE GENOMIC DNA]</scope>
    <source>
        <strain>HI2424</strain>
    </source>
</reference>
<dbReference type="EC" id="3.5.1.5" evidence="1"/>
<dbReference type="EMBL" id="CP000458">
    <property type="protein sequence ID" value="ABK07655.1"/>
    <property type="molecule type" value="Genomic_DNA"/>
</dbReference>
<dbReference type="RefSeq" id="WP_006406310.1">
    <property type="nucleotide sequence ID" value="NC_008542.1"/>
</dbReference>
<dbReference type="SMR" id="A0K578"/>
<dbReference type="GeneID" id="98102707"/>
<dbReference type="KEGG" id="bch:Bcen2424_0902"/>
<dbReference type="HOGENOM" id="CLU_145825_1_0_4"/>
<dbReference type="UniPathway" id="UPA00258">
    <property type="reaction ID" value="UER00370"/>
</dbReference>
<dbReference type="GO" id="GO:0005737">
    <property type="term" value="C:cytoplasm"/>
    <property type="evidence" value="ECO:0007669"/>
    <property type="project" value="UniProtKB-SubCell"/>
</dbReference>
<dbReference type="GO" id="GO:0016151">
    <property type="term" value="F:nickel cation binding"/>
    <property type="evidence" value="ECO:0007669"/>
    <property type="project" value="InterPro"/>
</dbReference>
<dbReference type="GO" id="GO:0009039">
    <property type="term" value="F:urease activity"/>
    <property type="evidence" value="ECO:0007669"/>
    <property type="project" value="UniProtKB-UniRule"/>
</dbReference>
<dbReference type="GO" id="GO:0043419">
    <property type="term" value="P:urea catabolic process"/>
    <property type="evidence" value="ECO:0007669"/>
    <property type="project" value="UniProtKB-UniRule"/>
</dbReference>
<dbReference type="CDD" id="cd00390">
    <property type="entry name" value="Urease_gamma"/>
    <property type="match status" value="1"/>
</dbReference>
<dbReference type="Gene3D" id="3.30.280.10">
    <property type="entry name" value="Urease, gamma-like subunit"/>
    <property type="match status" value="1"/>
</dbReference>
<dbReference type="HAMAP" id="MF_00739">
    <property type="entry name" value="Urease_gamma"/>
    <property type="match status" value="1"/>
</dbReference>
<dbReference type="InterPro" id="IPR012010">
    <property type="entry name" value="Urease_gamma"/>
</dbReference>
<dbReference type="InterPro" id="IPR002026">
    <property type="entry name" value="Urease_gamma/gamma-beta_su"/>
</dbReference>
<dbReference type="InterPro" id="IPR036463">
    <property type="entry name" value="Urease_gamma_sf"/>
</dbReference>
<dbReference type="InterPro" id="IPR050069">
    <property type="entry name" value="Urease_subunit"/>
</dbReference>
<dbReference type="NCBIfam" id="NF009712">
    <property type="entry name" value="PRK13241.1"/>
    <property type="match status" value="1"/>
</dbReference>
<dbReference type="NCBIfam" id="TIGR00193">
    <property type="entry name" value="urease_gam"/>
    <property type="match status" value="1"/>
</dbReference>
<dbReference type="PANTHER" id="PTHR33569">
    <property type="entry name" value="UREASE"/>
    <property type="match status" value="1"/>
</dbReference>
<dbReference type="PANTHER" id="PTHR33569:SF1">
    <property type="entry name" value="UREASE"/>
    <property type="match status" value="1"/>
</dbReference>
<dbReference type="Pfam" id="PF00547">
    <property type="entry name" value="Urease_gamma"/>
    <property type="match status" value="1"/>
</dbReference>
<dbReference type="PIRSF" id="PIRSF001223">
    <property type="entry name" value="Urease_gamma"/>
    <property type="match status" value="1"/>
</dbReference>
<dbReference type="SUPFAM" id="SSF54111">
    <property type="entry name" value="Urease, gamma-subunit"/>
    <property type="match status" value="1"/>
</dbReference>
<protein>
    <recommendedName>
        <fullName evidence="1">Urease subunit gamma</fullName>
        <ecNumber evidence="1">3.5.1.5</ecNumber>
    </recommendedName>
    <alternativeName>
        <fullName evidence="1">Urea amidohydrolase subunit gamma</fullName>
    </alternativeName>
</protein>
<evidence type="ECO:0000255" key="1">
    <source>
        <dbReference type="HAMAP-Rule" id="MF_00739"/>
    </source>
</evidence>
<organism>
    <name type="scientific">Burkholderia cenocepacia (strain HI2424)</name>
    <dbReference type="NCBI Taxonomy" id="331272"/>
    <lineage>
        <taxon>Bacteria</taxon>
        <taxon>Pseudomonadati</taxon>
        <taxon>Pseudomonadota</taxon>
        <taxon>Betaproteobacteria</taxon>
        <taxon>Burkholderiales</taxon>
        <taxon>Burkholderiaceae</taxon>
        <taxon>Burkholderia</taxon>
        <taxon>Burkholderia cepacia complex</taxon>
    </lineage>
</organism>
<proteinExistence type="inferred from homology"/>
<sequence length="100" mass="11100">MKLTPREKDKLLIFTAALLAERRRARGLKLNYPEAVAFITAALMEAARDGKTVAEVMHYGTTLLTRDDVMDGVPEMIPDIQVEATFPDGTKLVTVHHPIP</sequence>
<accession>A0K578</accession>